<accession>B8CGY2</accession>
<proteinExistence type="inferred from homology"/>
<keyword id="KW-0963">Cytoplasm</keyword>
<keyword id="KW-0369">Histidine metabolism</keyword>
<keyword id="KW-0378">Hydrolase</keyword>
<keyword id="KW-0408">Iron</keyword>
<keyword id="KW-0479">Metal-binding</keyword>
<keyword id="KW-0862">Zinc</keyword>
<protein>
    <recommendedName>
        <fullName evidence="1">Imidazolonepropionase</fullName>
        <ecNumber evidence="1">3.5.2.7</ecNumber>
    </recommendedName>
    <alternativeName>
        <fullName evidence="1">Imidazolone-5-propionate hydrolase</fullName>
    </alternativeName>
</protein>
<sequence>MSWDQVWIDINIATMSPNISEPYGAIRDAALAVKDGKIAWIGKRCDLPEFDVLATPIYKGKNGWLTPGLIDAHTHLVFAGNRANEFELRLQGASYEEIARNGGGIISTVNACREADEAELFELGRQRLNALAKEGVTTVEIKSGYGLDIETELKILRVARELGKHHHVDVKTTFLGAHAIPPEYKNDSDAYVDLVINEMLPQVIAENLADAVDVFCENIAFSLAQTERVLTAAKNAGLDIKLHAEQLSNLGGSEMAAKLGAKSVDHIEYLDEDGVKALSESGTCATLLPGAFYFLRETQLPPIELLRQYKVPMVVASDYNPGSSPLCSSLLMLNMACTLMRLTPEEALAGMTRNAAKALGIEAEVGVLETGMTADFCLWNISTPAELSYTYGVGSCIEVVKNGRLVHQ</sequence>
<feature type="chain" id="PRO_1000121556" description="Imidazolonepropionase">
    <location>
        <begin position="1"/>
        <end position="408"/>
    </location>
</feature>
<feature type="binding site" evidence="1">
    <location>
        <position position="73"/>
    </location>
    <ligand>
        <name>Fe(3+)</name>
        <dbReference type="ChEBI" id="CHEBI:29034"/>
    </ligand>
</feature>
<feature type="binding site" evidence="1">
    <location>
        <position position="73"/>
    </location>
    <ligand>
        <name>Zn(2+)</name>
        <dbReference type="ChEBI" id="CHEBI:29105"/>
    </ligand>
</feature>
<feature type="binding site" evidence="1">
    <location>
        <position position="75"/>
    </location>
    <ligand>
        <name>Fe(3+)</name>
        <dbReference type="ChEBI" id="CHEBI:29034"/>
    </ligand>
</feature>
<feature type="binding site" evidence="1">
    <location>
        <position position="75"/>
    </location>
    <ligand>
        <name>Zn(2+)</name>
        <dbReference type="ChEBI" id="CHEBI:29105"/>
    </ligand>
</feature>
<feature type="binding site" evidence="1">
    <location>
        <position position="82"/>
    </location>
    <ligand>
        <name>4-imidazolone-5-propanoate</name>
        <dbReference type="ChEBI" id="CHEBI:77893"/>
    </ligand>
</feature>
<feature type="binding site" evidence="1">
    <location>
        <position position="145"/>
    </location>
    <ligand>
        <name>4-imidazolone-5-propanoate</name>
        <dbReference type="ChEBI" id="CHEBI:77893"/>
    </ligand>
</feature>
<feature type="binding site" evidence="1">
    <location>
        <position position="145"/>
    </location>
    <ligand>
        <name>N-formimidoyl-L-glutamate</name>
        <dbReference type="ChEBI" id="CHEBI:58928"/>
    </ligand>
</feature>
<feature type="binding site" evidence="1">
    <location>
        <position position="178"/>
    </location>
    <ligand>
        <name>4-imidazolone-5-propanoate</name>
        <dbReference type="ChEBI" id="CHEBI:77893"/>
    </ligand>
</feature>
<feature type="binding site" evidence="1">
    <location>
        <position position="243"/>
    </location>
    <ligand>
        <name>Fe(3+)</name>
        <dbReference type="ChEBI" id="CHEBI:29034"/>
    </ligand>
</feature>
<feature type="binding site" evidence="1">
    <location>
        <position position="243"/>
    </location>
    <ligand>
        <name>Zn(2+)</name>
        <dbReference type="ChEBI" id="CHEBI:29105"/>
    </ligand>
</feature>
<feature type="binding site" evidence="1">
    <location>
        <position position="246"/>
    </location>
    <ligand>
        <name>4-imidazolone-5-propanoate</name>
        <dbReference type="ChEBI" id="CHEBI:77893"/>
    </ligand>
</feature>
<feature type="binding site" evidence="1">
    <location>
        <position position="318"/>
    </location>
    <ligand>
        <name>Fe(3+)</name>
        <dbReference type="ChEBI" id="CHEBI:29034"/>
    </ligand>
</feature>
<feature type="binding site" evidence="1">
    <location>
        <position position="318"/>
    </location>
    <ligand>
        <name>Zn(2+)</name>
        <dbReference type="ChEBI" id="CHEBI:29105"/>
    </ligand>
</feature>
<feature type="binding site" evidence="1">
    <location>
        <position position="320"/>
    </location>
    <ligand>
        <name>N-formimidoyl-L-glutamate</name>
        <dbReference type="ChEBI" id="CHEBI:58928"/>
    </ligand>
</feature>
<feature type="binding site" evidence="1">
    <location>
        <position position="322"/>
    </location>
    <ligand>
        <name>N-formimidoyl-L-glutamate</name>
        <dbReference type="ChEBI" id="CHEBI:58928"/>
    </ligand>
</feature>
<feature type="binding site" evidence="1">
    <location>
        <position position="323"/>
    </location>
    <ligand>
        <name>4-imidazolone-5-propanoate</name>
        <dbReference type="ChEBI" id="CHEBI:77893"/>
    </ligand>
</feature>
<evidence type="ECO:0000255" key="1">
    <source>
        <dbReference type="HAMAP-Rule" id="MF_00372"/>
    </source>
</evidence>
<name>HUTI_SHEPW</name>
<comment type="function">
    <text evidence="1">Catalyzes the hydrolytic cleavage of the carbon-nitrogen bond in imidazolone-5-propanoate to yield N-formimidoyl-L-glutamate. It is the third step in the universal histidine degradation pathway.</text>
</comment>
<comment type="catalytic activity">
    <reaction evidence="1">
        <text>4-imidazolone-5-propanoate + H2O = N-formimidoyl-L-glutamate</text>
        <dbReference type="Rhea" id="RHEA:23660"/>
        <dbReference type="ChEBI" id="CHEBI:15377"/>
        <dbReference type="ChEBI" id="CHEBI:58928"/>
        <dbReference type="ChEBI" id="CHEBI:77893"/>
        <dbReference type="EC" id="3.5.2.7"/>
    </reaction>
</comment>
<comment type="cofactor">
    <cofactor evidence="1">
        <name>Zn(2+)</name>
        <dbReference type="ChEBI" id="CHEBI:29105"/>
    </cofactor>
    <cofactor evidence="1">
        <name>Fe(3+)</name>
        <dbReference type="ChEBI" id="CHEBI:29034"/>
    </cofactor>
    <text evidence="1">Binds 1 zinc or iron ion per subunit.</text>
</comment>
<comment type="pathway">
    <text evidence="1">Amino-acid degradation; L-histidine degradation into L-glutamate; N-formimidoyl-L-glutamate from L-histidine: step 3/3.</text>
</comment>
<comment type="subcellular location">
    <subcellularLocation>
        <location evidence="1">Cytoplasm</location>
    </subcellularLocation>
</comment>
<comment type="similarity">
    <text evidence="1">Belongs to the metallo-dependent hydrolases superfamily. HutI family.</text>
</comment>
<reference key="1">
    <citation type="journal article" date="2008" name="PLoS ONE">
        <title>Environmental adaptation: genomic analysis of the piezotolerant and psychrotolerant deep-sea iron reducing bacterium Shewanella piezotolerans WP3.</title>
        <authorList>
            <person name="Wang F."/>
            <person name="Wang J."/>
            <person name="Jian H."/>
            <person name="Zhang B."/>
            <person name="Li S."/>
            <person name="Wang F."/>
            <person name="Zeng X."/>
            <person name="Gao L."/>
            <person name="Bartlett D.H."/>
            <person name="Yu J."/>
            <person name="Hu S."/>
            <person name="Xiao X."/>
        </authorList>
    </citation>
    <scope>NUCLEOTIDE SEQUENCE [LARGE SCALE GENOMIC DNA]</scope>
    <source>
        <strain>WP3 / JCM 13877</strain>
    </source>
</reference>
<organism>
    <name type="scientific">Shewanella piezotolerans (strain WP3 / JCM 13877)</name>
    <dbReference type="NCBI Taxonomy" id="225849"/>
    <lineage>
        <taxon>Bacteria</taxon>
        <taxon>Pseudomonadati</taxon>
        <taxon>Pseudomonadota</taxon>
        <taxon>Gammaproteobacteria</taxon>
        <taxon>Alteromonadales</taxon>
        <taxon>Shewanellaceae</taxon>
        <taxon>Shewanella</taxon>
    </lineage>
</organism>
<gene>
    <name evidence="1" type="primary">hutI</name>
    <name type="ordered locus">swp_0131</name>
</gene>
<dbReference type="EC" id="3.5.2.7" evidence="1"/>
<dbReference type="EMBL" id="CP000472">
    <property type="protein sequence ID" value="ACJ26975.1"/>
    <property type="molecule type" value="Genomic_DNA"/>
</dbReference>
<dbReference type="RefSeq" id="WP_020910359.1">
    <property type="nucleotide sequence ID" value="NC_011566.1"/>
</dbReference>
<dbReference type="SMR" id="B8CGY2"/>
<dbReference type="STRING" id="225849.swp_0131"/>
<dbReference type="KEGG" id="swp:swp_0131"/>
<dbReference type="eggNOG" id="COG1228">
    <property type="taxonomic scope" value="Bacteria"/>
</dbReference>
<dbReference type="HOGENOM" id="CLU_041647_0_0_6"/>
<dbReference type="OrthoDB" id="9776455at2"/>
<dbReference type="UniPathway" id="UPA00379">
    <property type="reaction ID" value="UER00551"/>
</dbReference>
<dbReference type="Proteomes" id="UP000000753">
    <property type="component" value="Chromosome"/>
</dbReference>
<dbReference type="GO" id="GO:0005737">
    <property type="term" value="C:cytoplasm"/>
    <property type="evidence" value="ECO:0007669"/>
    <property type="project" value="UniProtKB-SubCell"/>
</dbReference>
<dbReference type="GO" id="GO:0050480">
    <property type="term" value="F:imidazolonepropionase activity"/>
    <property type="evidence" value="ECO:0007669"/>
    <property type="project" value="UniProtKB-UniRule"/>
</dbReference>
<dbReference type="GO" id="GO:0005506">
    <property type="term" value="F:iron ion binding"/>
    <property type="evidence" value="ECO:0007669"/>
    <property type="project" value="UniProtKB-UniRule"/>
</dbReference>
<dbReference type="GO" id="GO:0008270">
    <property type="term" value="F:zinc ion binding"/>
    <property type="evidence" value="ECO:0007669"/>
    <property type="project" value="UniProtKB-UniRule"/>
</dbReference>
<dbReference type="GO" id="GO:0019556">
    <property type="term" value="P:L-histidine catabolic process to glutamate and formamide"/>
    <property type="evidence" value="ECO:0007669"/>
    <property type="project" value="UniProtKB-UniPathway"/>
</dbReference>
<dbReference type="GO" id="GO:0019557">
    <property type="term" value="P:L-histidine catabolic process to glutamate and formate"/>
    <property type="evidence" value="ECO:0007669"/>
    <property type="project" value="UniProtKB-UniPathway"/>
</dbReference>
<dbReference type="CDD" id="cd01296">
    <property type="entry name" value="Imidazolone-5PH"/>
    <property type="match status" value="1"/>
</dbReference>
<dbReference type="FunFam" id="3.20.20.140:FF:000007">
    <property type="entry name" value="Imidazolonepropionase"/>
    <property type="match status" value="1"/>
</dbReference>
<dbReference type="Gene3D" id="3.20.20.140">
    <property type="entry name" value="Metal-dependent hydrolases"/>
    <property type="match status" value="1"/>
</dbReference>
<dbReference type="Gene3D" id="2.30.40.10">
    <property type="entry name" value="Urease, subunit C, domain 1"/>
    <property type="match status" value="1"/>
</dbReference>
<dbReference type="HAMAP" id="MF_00372">
    <property type="entry name" value="HutI"/>
    <property type="match status" value="1"/>
</dbReference>
<dbReference type="InterPro" id="IPR006680">
    <property type="entry name" value="Amidohydro-rel"/>
</dbReference>
<dbReference type="InterPro" id="IPR005920">
    <property type="entry name" value="HutI"/>
</dbReference>
<dbReference type="InterPro" id="IPR011059">
    <property type="entry name" value="Metal-dep_hydrolase_composite"/>
</dbReference>
<dbReference type="InterPro" id="IPR032466">
    <property type="entry name" value="Metal_Hydrolase"/>
</dbReference>
<dbReference type="NCBIfam" id="TIGR01224">
    <property type="entry name" value="hutI"/>
    <property type="match status" value="1"/>
</dbReference>
<dbReference type="PANTHER" id="PTHR42752">
    <property type="entry name" value="IMIDAZOLONEPROPIONASE"/>
    <property type="match status" value="1"/>
</dbReference>
<dbReference type="PANTHER" id="PTHR42752:SF1">
    <property type="entry name" value="IMIDAZOLONEPROPIONASE-RELATED"/>
    <property type="match status" value="1"/>
</dbReference>
<dbReference type="Pfam" id="PF01979">
    <property type="entry name" value="Amidohydro_1"/>
    <property type="match status" value="1"/>
</dbReference>
<dbReference type="SUPFAM" id="SSF51338">
    <property type="entry name" value="Composite domain of metallo-dependent hydrolases"/>
    <property type="match status" value="1"/>
</dbReference>
<dbReference type="SUPFAM" id="SSF51556">
    <property type="entry name" value="Metallo-dependent hydrolases"/>
    <property type="match status" value="1"/>
</dbReference>